<name>MRNIP_DANRE</name>
<gene>
    <name evidence="1" type="primary">mrnip</name>
    <name type="ORF">zgc:123335</name>
</gene>
<feature type="chain" id="PRO_0000326121" description="MRN complex-interacting protein">
    <location>
        <begin position="1"/>
        <end position="395"/>
    </location>
</feature>
<feature type="region of interest" description="Disordered" evidence="2">
    <location>
        <begin position="90"/>
        <end position="155"/>
    </location>
</feature>
<feature type="region of interest" description="Disordered" evidence="2">
    <location>
        <begin position="180"/>
        <end position="275"/>
    </location>
</feature>
<feature type="short sequence motif" description="Nuclear localization signal (NLS)" evidence="1">
    <location>
        <begin position="142"/>
        <end position="145"/>
    </location>
</feature>
<feature type="compositionally biased region" description="Basic and acidic residues" evidence="2">
    <location>
        <begin position="90"/>
        <end position="100"/>
    </location>
</feature>
<feature type="compositionally biased region" description="Polar residues" evidence="2">
    <location>
        <begin position="104"/>
        <end position="113"/>
    </location>
</feature>
<feature type="compositionally biased region" description="Acidic residues" evidence="2">
    <location>
        <begin position="117"/>
        <end position="127"/>
    </location>
</feature>
<feature type="compositionally biased region" description="Low complexity" evidence="2">
    <location>
        <begin position="183"/>
        <end position="195"/>
    </location>
</feature>
<feature type="compositionally biased region" description="Polar residues" evidence="2">
    <location>
        <begin position="224"/>
        <end position="244"/>
    </location>
</feature>
<feature type="compositionally biased region" description="Polar residues" evidence="2">
    <location>
        <begin position="260"/>
        <end position="270"/>
    </location>
</feature>
<protein>
    <recommendedName>
        <fullName evidence="1">MRN complex-interacting protein</fullName>
    </recommendedName>
    <alternativeName>
        <fullName evidence="1">MRN-interacting protein</fullName>
    </alternativeName>
</protein>
<keyword id="KW-0227">DNA damage</keyword>
<keyword id="KW-0234">DNA repair</keyword>
<keyword id="KW-0539">Nucleus</keyword>
<keyword id="KW-0597">Phosphoprotein</keyword>
<keyword id="KW-1185">Reference proteome</keyword>
<proteinExistence type="evidence at transcript level"/>
<comment type="function">
    <text evidence="1">Plays a role in the cellular response to DNA damage and the maintenance of genome stability through its association with the MRN damage-sensing complex. Promotes chromatin loading and activity of the MRN complex to facilitate subsequent ATM-mediated DNA damage response signaling and DNA repair.</text>
</comment>
<comment type="subcellular location">
    <subcellularLocation>
        <location evidence="1">Nucleus</location>
    </subcellularLocation>
    <subcellularLocation>
        <location evidence="1">Nucleus</location>
        <location evidence="1">Nucleoplasm</location>
    </subcellularLocation>
</comment>
<comment type="similarity">
    <text evidence="3">Belongs to the MRNIP family.</text>
</comment>
<evidence type="ECO:0000250" key="1">
    <source>
        <dbReference type="UniProtKB" id="Q6NTE8"/>
    </source>
</evidence>
<evidence type="ECO:0000256" key="2">
    <source>
        <dbReference type="SAM" id="MobiDB-lite"/>
    </source>
</evidence>
<evidence type="ECO:0000305" key="3"/>
<reference key="1">
    <citation type="submission" date="2005-10" db="EMBL/GenBank/DDBJ databases">
        <authorList>
            <consortium name="NIH - Zebrafish Gene Collection (ZGC) project"/>
        </authorList>
    </citation>
    <scope>NUCLEOTIDE SEQUENCE [LARGE SCALE MRNA]</scope>
    <source>
        <tissue>Ovary</tissue>
    </source>
</reference>
<sequence>MVQEFNVLRCFSCQTFQVQQVKKAKKWTCKVCGEKQSLIKEFGRGAAADCRRHVQKLNALRGEQHQLNTQQLLAQGDEENENEDVYEVLDPKSEQEEAHVSRWSKYTDQTTEGPNEEKDDEDEDENVYTERPQFRIQGTRKRKKMSSLEPFGGNCDNYEESRAGYSQFRKQAYLPLQLEKRSSSSWNKGSVSKYSNCQRPDDVVPSARTKLPSSRQTVGHYPTACSSSTNTMENSIGNKQQIKSSYRPPTADVNKHLPIQSESPSVSSHQKFGESTIENKDSKWNKFLTIVPTQDKEEYYYESQNGKKTLIPYFTKADTVVDFEERRCPADEKDSGILNRQKVVGGNASCPTTRLPTKSVGFENAVCKPVLVKAPYSSLSLNPLFCTDEDFDDTS</sequence>
<dbReference type="EMBL" id="BC108042">
    <property type="protein sequence ID" value="AAI08043.1"/>
    <property type="molecule type" value="mRNA"/>
</dbReference>
<dbReference type="RefSeq" id="NP_001032483.1">
    <property type="nucleotide sequence ID" value="NM_001037406.1"/>
</dbReference>
<dbReference type="STRING" id="7955.ENSDARP00000118717"/>
<dbReference type="PaxDb" id="7955-ENSDARP00000101365"/>
<dbReference type="AGR" id="ZFIN:ZDB-GENE-051113-228"/>
<dbReference type="ZFIN" id="ZDB-GENE-051113-228">
    <property type="gene designation" value="mrnip"/>
</dbReference>
<dbReference type="eggNOG" id="ENOG502S8YD">
    <property type="taxonomic scope" value="Eukaryota"/>
</dbReference>
<dbReference type="InParanoid" id="Q32PP1"/>
<dbReference type="PRO" id="PR:Q32PP1"/>
<dbReference type="Proteomes" id="UP000000437">
    <property type="component" value="Unplaced"/>
</dbReference>
<dbReference type="GO" id="GO:0005654">
    <property type="term" value="C:nucleoplasm"/>
    <property type="evidence" value="ECO:0000250"/>
    <property type="project" value="UniProtKB"/>
</dbReference>
<dbReference type="GO" id="GO:0005634">
    <property type="term" value="C:nucleus"/>
    <property type="evidence" value="ECO:0000250"/>
    <property type="project" value="UniProtKB"/>
</dbReference>
<dbReference type="GO" id="GO:0003682">
    <property type="term" value="F:chromatin binding"/>
    <property type="evidence" value="ECO:0000250"/>
    <property type="project" value="UniProtKB"/>
</dbReference>
<dbReference type="GO" id="GO:0006974">
    <property type="term" value="P:DNA damage response"/>
    <property type="evidence" value="ECO:0000250"/>
    <property type="project" value="UniProtKB"/>
</dbReference>
<dbReference type="GO" id="GO:0006281">
    <property type="term" value="P:DNA repair"/>
    <property type="evidence" value="ECO:0007669"/>
    <property type="project" value="UniProtKB-KW"/>
</dbReference>
<dbReference type="GO" id="GO:0007095">
    <property type="term" value="P:mitotic G2 DNA damage checkpoint signaling"/>
    <property type="evidence" value="ECO:0000250"/>
    <property type="project" value="UniProtKB"/>
</dbReference>
<dbReference type="GO" id="GO:1905168">
    <property type="term" value="P:positive regulation of double-strand break repair via homologous recombination"/>
    <property type="evidence" value="ECO:0000250"/>
    <property type="project" value="UniProtKB"/>
</dbReference>
<dbReference type="GO" id="GO:0045860">
    <property type="term" value="P:positive regulation of protein kinase activity"/>
    <property type="evidence" value="ECO:0000250"/>
    <property type="project" value="UniProtKB"/>
</dbReference>
<dbReference type="GO" id="GO:0071168">
    <property type="term" value="P:protein localization to chromatin"/>
    <property type="evidence" value="ECO:0000250"/>
    <property type="project" value="UniProtKB"/>
</dbReference>
<dbReference type="GO" id="GO:2001032">
    <property type="term" value="P:regulation of double-strand break repair via nonhomologous end joining"/>
    <property type="evidence" value="ECO:0000250"/>
    <property type="project" value="UniProtKB"/>
</dbReference>
<dbReference type="GO" id="GO:0010212">
    <property type="term" value="P:response to ionizing radiation"/>
    <property type="evidence" value="ECO:0000250"/>
    <property type="project" value="UniProtKB"/>
</dbReference>
<dbReference type="InterPro" id="IPR032739">
    <property type="entry name" value="MRNIP"/>
</dbReference>
<dbReference type="InterPro" id="IPR049472">
    <property type="entry name" value="MRNIP_N"/>
</dbReference>
<dbReference type="PANTHER" id="PTHR15863">
    <property type="entry name" value="MRN COMPLEX-INTERACTING PROTEIN"/>
    <property type="match status" value="1"/>
</dbReference>
<dbReference type="PANTHER" id="PTHR15863:SF2">
    <property type="entry name" value="MRN COMPLEX-INTERACTING PROTEIN"/>
    <property type="match status" value="1"/>
</dbReference>
<dbReference type="Pfam" id="PF15749">
    <property type="entry name" value="MRNIP"/>
    <property type="match status" value="1"/>
</dbReference>
<organism>
    <name type="scientific">Danio rerio</name>
    <name type="common">Zebrafish</name>
    <name type="synonym">Brachydanio rerio</name>
    <dbReference type="NCBI Taxonomy" id="7955"/>
    <lineage>
        <taxon>Eukaryota</taxon>
        <taxon>Metazoa</taxon>
        <taxon>Chordata</taxon>
        <taxon>Craniata</taxon>
        <taxon>Vertebrata</taxon>
        <taxon>Euteleostomi</taxon>
        <taxon>Actinopterygii</taxon>
        <taxon>Neopterygii</taxon>
        <taxon>Teleostei</taxon>
        <taxon>Ostariophysi</taxon>
        <taxon>Cypriniformes</taxon>
        <taxon>Danionidae</taxon>
        <taxon>Danioninae</taxon>
        <taxon>Danio</taxon>
    </lineage>
</organism>
<accession>Q32PP1</accession>